<reference key="1">
    <citation type="journal article" date="2005" name="J. Bacteriol.">
        <title>Whole-genome sequencing of Staphylococcus haemolyticus uncovers the extreme plasticity of its genome and the evolution of human-colonizing staphylococcal species.</title>
        <authorList>
            <person name="Takeuchi F."/>
            <person name="Watanabe S."/>
            <person name="Baba T."/>
            <person name="Yuzawa H."/>
            <person name="Ito T."/>
            <person name="Morimoto Y."/>
            <person name="Kuroda M."/>
            <person name="Cui L."/>
            <person name="Takahashi M."/>
            <person name="Ankai A."/>
            <person name="Baba S."/>
            <person name="Fukui S."/>
            <person name="Lee J.C."/>
            <person name="Hiramatsu K."/>
        </authorList>
    </citation>
    <scope>NUCLEOTIDE SEQUENCE [LARGE SCALE GENOMIC DNA]</scope>
    <source>
        <strain>JCSC1435</strain>
    </source>
</reference>
<protein>
    <recommendedName>
        <fullName evidence="1">Potassium-transporting ATPase KdpC subunit</fullName>
    </recommendedName>
    <alternativeName>
        <fullName evidence="1">ATP phosphohydrolase [potassium-transporting] C chain</fullName>
    </alternativeName>
    <alternativeName>
        <fullName evidence="1">Potassium-binding and translocating subunit C</fullName>
    </alternativeName>
    <alternativeName>
        <fullName evidence="1">Potassium-translocating ATPase C chain</fullName>
    </alternativeName>
</protein>
<organism>
    <name type="scientific">Staphylococcus haemolyticus (strain JCSC1435)</name>
    <dbReference type="NCBI Taxonomy" id="279808"/>
    <lineage>
        <taxon>Bacteria</taxon>
        <taxon>Bacillati</taxon>
        <taxon>Bacillota</taxon>
        <taxon>Bacilli</taxon>
        <taxon>Bacillales</taxon>
        <taxon>Staphylococcaceae</taxon>
        <taxon>Staphylococcus</taxon>
    </lineage>
</organism>
<accession>Q4LAI1</accession>
<proteinExistence type="inferred from homology"/>
<gene>
    <name evidence="1" type="primary">kdpC</name>
    <name type="ordered locus">SH0035</name>
</gene>
<dbReference type="EMBL" id="AP006716">
    <property type="protein sequence ID" value="BAE03344.1"/>
    <property type="molecule type" value="Genomic_DNA"/>
</dbReference>
<dbReference type="RefSeq" id="WP_011274390.1">
    <property type="nucleotide sequence ID" value="NC_007168.1"/>
</dbReference>
<dbReference type="SMR" id="Q4LAI1"/>
<dbReference type="KEGG" id="sha:SH0035"/>
<dbReference type="eggNOG" id="COG2156">
    <property type="taxonomic scope" value="Bacteria"/>
</dbReference>
<dbReference type="HOGENOM" id="CLU_077094_2_0_9"/>
<dbReference type="OrthoDB" id="9809491at2"/>
<dbReference type="Proteomes" id="UP000000543">
    <property type="component" value="Chromosome"/>
</dbReference>
<dbReference type="GO" id="GO:0005886">
    <property type="term" value="C:plasma membrane"/>
    <property type="evidence" value="ECO:0007669"/>
    <property type="project" value="UniProtKB-SubCell"/>
</dbReference>
<dbReference type="GO" id="GO:0005524">
    <property type="term" value="F:ATP binding"/>
    <property type="evidence" value="ECO:0007669"/>
    <property type="project" value="UniProtKB-UniRule"/>
</dbReference>
<dbReference type="GO" id="GO:0008556">
    <property type="term" value="F:P-type potassium transmembrane transporter activity"/>
    <property type="evidence" value="ECO:0007669"/>
    <property type="project" value="InterPro"/>
</dbReference>
<dbReference type="HAMAP" id="MF_00276">
    <property type="entry name" value="KdpC"/>
    <property type="match status" value="1"/>
</dbReference>
<dbReference type="InterPro" id="IPR003820">
    <property type="entry name" value="KdpC"/>
</dbReference>
<dbReference type="NCBIfam" id="TIGR00681">
    <property type="entry name" value="kdpC"/>
    <property type="match status" value="1"/>
</dbReference>
<dbReference type="NCBIfam" id="NF001454">
    <property type="entry name" value="PRK00315.1"/>
    <property type="match status" value="1"/>
</dbReference>
<dbReference type="NCBIfam" id="NF010604">
    <property type="entry name" value="PRK14000.1"/>
    <property type="match status" value="1"/>
</dbReference>
<dbReference type="PANTHER" id="PTHR30042">
    <property type="entry name" value="POTASSIUM-TRANSPORTING ATPASE C CHAIN"/>
    <property type="match status" value="1"/>
</dbReference>
<dbReference type="PANTHER" id="PTHR30042:SF2">
    <property type="entry name" value="POTASSIUM-TRANSPORTING ATPASE KDPC SUBUNIT"/>
    <property type="match status" value="1"/>
</dbReference>
<dbReference type="Pfam" id="PF02669">
    <property type="entry name" value="KdpC"/>
    <property type="match status" value="1"/>
</dbReference>
<dbReference type="PIRSF" id="PIRSF001296">
    <property type="entry name" value="K_ATPase_KdpC"/>
    <property type="match status" value="1"/>
</dbReference>
<feature type="chain" id="PRO_0000197018" description="Potassium-transporting ATPase KdpC subunit">
    <location>
        <begin position="1"/>
        <end position="185"/>
    </location>
</feature>
<feature type="transmembrane region" description="Helical" evidence="1">
    <location>
        <begin position="8"/>
        <end position="28"/>
    </location>
</feature>
<feature type="region of interest" description="Disordered" evidence="2">
    <location>
        <begin position="113"/>
        <end position="132"/>
    </location>
</feature>
<feature type="compositionally biased region" description="Polar residues" evidence="2">
    <location>
        <begin position="114"/>
        <end position="126"/>
    </location>
</feature>
<evidence type="ECO:0000255" key="1">
    <source>
        <dbReference type="HAMAP-Rule" id="MF_00276"/>
    </source>
</evidence>
<evidence type="ECO:0000256" key="2">
    <source>
        <dbReference type="SAM" id="MobiDB-lite"/>
    </source>
</evidence>
<keyword id="KW-0067">ATP-binding</keyword>
<keyword id="KW-1003">Cell membrane</keyword>
<keyword id="KW-0406">Ion transport</keyword>
<keyword id="KW-0472">Membrane</keyword>
<keyword id="KW-0547">Nucleotide-binding</keyword>
<keyword id="KW-0630">Potassium</keyword>
<keyword id="KW-0633">Potassium transport</keyword>
<keyword id="KW-0812">Transmembrane</keyword>
<keyword id="KW-1133">Transmembrane helix</keyword>
<keyword id="KW-0813">Transport</keyword>
<name>KDPC_STAHJ</name>
<sequence length="185" mass="20136">MQTIRKSLGLVLIMFVLCGFIFPLTVTALGQVLFPEQANGSLVKQDGKVIGSKLIGQQWTEPKYFHGRISAVNYNMNANEVKESGGPASGGSNYGNSNPELKKRVQETIKQEGQKLSSDAVTTSGSGLDPDITVDNAKQQVKCIAKERNIDASKINHLIDENKQASPMADDYVNVLKLNITLDKL</sequence>
<comment type="function">
    <text evidence="1">Part of the high-affinity ATP-driven potassium transport (or Kdp) system, which catalyzes the hydrolysis of ATP coupled with the electrogenic transport of potassium into the cytoplasm. This subunit acts as a catalytic chaperone that increases the ATP-binding affinity of the ATP-hydrolyzing subunit KdpB by the formation of a transient KdpB/KdpC/ATP ternary complex.</text>
</comment>
<comment type="subunit">
    <text evidence="1">The system is composed of three essential subunits: KdpA, KdpB and KdpC.</text>
</comment>
<comment type="subcellular location">
    <subcellularLocation>
        <location evidence="1">Cell membrane</location>
        <topology evidence="1">Single-pass membrane protein</topology>
    </subcellularLocation>
</comment>
<comment type="similarity">
    <text evidence="1">Belongs to the KdpC family.</text>
</comment>